<comment type="function">
    <text>May regulate secretion and presynaptic differentiation through inhibition of the activity of N-type voltage-gated calcium channel. During presynaptic differentiation may regulate both synaptic vesicle accumulation in axon terminals and subsequent axon terminal remodeling.</text>
</comment>
<comment type="catalytic activity">
    <reaction evidence="4">
        <text>NAD(+) + H2O = ADP-D-ribose + nicotinamide + H(+)</text>
        <dbReference type="Rhea" id="RHEA:16301"/>
        <dbReference type="ChEBI" id="CHEBI:15377"/>
        <dbReference type="ChEBI" id="CHEBI:15378"/>
        <dbReference type="ChEBI" id="CHEBI:17154"/>
        <dbReference type="ChEBI" id="CHEBI:57540"/>
        <dbReference type="ChEBI" id="CHEBI:57967"/>
        <dbReference type="EC" id="3.2.2.6"/>
    </reaction>
    <physiologicalReaction direction="left-to-right" evidence="4">
        <dbReference type="Rhea" id="RHEA:16302"/>
    </physiologicalReaction>
</comment>
<comment type="subcellular location">
    <subcellularLocation>
        <location evidence="1">Cell membrane</location>
        <topology evidence="1">Single-pass type I membrane protein</topology>
    </subcellularLocation>
    <subcellularLocation>
        <location evidence="1">Cytoplasm</location>
    </subcellularLocation>
    <text evidence="1">May localize to the cell body and growth cones of dendrite-like processes.</text>
</comment>
<comment type="alternative products">
    <event type="alternative splicing"/>
    <isoform>
        <id>B6ZK76-1</id>
        <name>1</name>
        <sequence type="displayed"/>
    </isoform>
    <isoform>
        <id>B6ZK76-2</id>
        <name>2</name>
        <sequence type="described" ref="VSP_038547"/>
    </isoform>
</comment>
<comment type="developmental stage">
    <text evidence="5">Maternally provided it is detected at all tested stages of development.</text>
</comment>
<comment type="domain">
    <text evidence="4">The TIR domain mediates NAD(+) hydrolase (NADase) activity. Self-association of TIR domains is required for NADase activity.</text>
</comment>
<comment type="similarity">
    <text evidence="7">Belongs to the interleukin-1 receptor family.</text>
</comment>
<reference key="1">
    <citation type="journal article" date="2008" name="Mol. Cell. Neurosci.">
        <title>Zebrafish orthologue of mental retardation protein IL1RAPL1 regulates presynaptic differentiation.</title>
        <authorList>
            <person name="Yoshida T."/>
            <person name="Mishina M."/>
        </authorList>
    </citation>
    <scope>NUCLEOTIDE SEQUENCE [MRNA]</scope>
    <scope>DEVELOPMENTAL STAGE</scope>
</reference>
<reference key="2">
    <citation type="submission" date="2006-10" db="EMBL/GenBank/DDBJ databases">
        <authorList>
            <consortium name="NIH - Zebrafish Gene Collection (ZGC) project"/>
        </authorList>
    </citation>
    <scope>NUCLEOTIDE SEQUENCE [LARGE SCALE MRNA] (ISOFORM 2)</scope>
    <source>
        <strain>AB</strain>
    </source>
</reference>
<proteinExistence type="evidence at transcript level"/>
<organism>
    <name type="scientific">Danio rerio</name>
    <name type="common">Zebrafish</name>
    <name type="synonym">Brachydanio rerio</name>
    <dbReference type="NCBI Taxonomy" id="7955"/>
    <lineage>
        <taxon>Eukaryota</taxon>
        <taxon>Metazoa</taxon>
        <taxon>Chordata</taxon>
        <taxon>Craniata</taxon>
        <taxon>Vertebrata</taxon>
        <taxon>Euteleostomi</taxon>
        <taxon>Actinopterygii</taxon>
        <taxon>Neopterygii</taxon>
        <taxon>Teleostei</taxon>
        <taxon>Ostariophysi</taxon>
        <taxon>Cypriniformes</taxon>
        <taxon>Danionidae</taxon>
        <taxon>Danioninae</taxon>
        <taxon>Danio</taxon>
    </lineage>
</organism>
<keyword id="KW-0025">Alternative splicing</keyword>
<keyword id="KW-1003">Cell membrane</keyword>
<keyword id="KW-0963">Cytoplasm</keyword>
<keyword id="KW-1015">Disulfide bond</keyword>
<keyword id="KW-0325">Glycoprotein</keyword>
<keyword id="KW-0378">Hydrolase</keyword>
<keyword id="KW-0393">Immunoglobulin domain</keyword>
<keyword id="KW-0472">Membrane</keyword>
<keyword id="KW-0520">NAD</keyword>
<keyword id="KW-0675">Receptor</keyword>
<keyword id="KW-1185">Reference proteome</keyword>
<keyword id="KW-0677">Repeat</keyword>
<keyword id="KW-0732">Signal</keyword>
<keyword id="KW-0812">Transmembrane</keyword>
<keyword id="KW-1133">Transmembrane helix</keyword>
<sequence length="701" mass="79647">MTALNPVLFLLCGVSVSLSLKVVSKRGSVDGCTDWSVDYLKYRVLHGEPVRIKCALFYGYIRANYTQAQSIGLSLMWYRSSGLGHGDFEEPISFDGTRMSKEEDAIWFRPAELQDAGLYSCVLRNSTFCMKVSMTLLVADNDTAGCYNSKLRYTEKGELGKSKDISCPDIQDYVQPGEKPQITWYKECNVQQWRSSVLQTADLLAIQDVREDDIGNYTCELLFGGFLVRRTTYLSVTAPLTEEPPRILFPSENKLLAMDVQLGSMLNLTCRAFFGYSGDISPLVYWMKGEKFIEDMDQSRIRESEIKTVREHLGEQEVSITLTIDSLEEVDLGNYSCYAENGNGRRQANVQIGKRVELMYTVELAGGLGAILLLLALLLSVYKCYRIELLLCYRHHFGGEDTDGDNKEYDAYLSYSKVELDQWGQELQEEERFALEILPDVLEKHYGYKLFIPDRDLIPTSTYIEDVSRCVDMSKRLIIVLTPSYVLRRGWSIFELESRLRNSLVSGDIKVILIECADLRGVINYQEVEELKQSIKCLSVVHWNGPQSNKPGSRFWKQLRYTMPYRRPQQTITNHALDTSEPGPFADLQTVSAISMATATSAALAPAHPELRPSLRSSYRSHSLARQKHSHYRSYDYELPFTAGGTLPPQHTYCNLPLTLLNGQRPVNNKTLRQHSLDEHHGNNAMLPLLPRETSISSVIW</sequence>
<name>IRL1A_DANRE</name>
<feature type="signal peptide" evidence="2">
    <location>
        <begin position="1"/>
        <end position="19"/>
    </location>
</feature>
<feature type="chain" id="PRO_0000390562" description="Interleukin-1 receptor accessory protein-like 1-A">
    <location>
        <begin position="20"/>
        <end position="701"/>
    </location>
</feature>
<feature type="topological domain" description="Extracellular" evidence="2">
    <location>
        <begin position="20"/>
        <end position="361"/>
    </location>
</feature>
<feature type="transmembrane region" description="Helical" evidence="2">
    <location>
        <begin position="362"/>
        <end position="382"/>
    </location>
</feature>
<feature type="topological domain" description="Cytoplasmic" evidence="2">
    <location>
        <begin position="383"/>
        <end position="701"/>
    </location>
</feature>
<feature type="domain" description="Ig-like C2-type 1">
    <location>
        <begin position="33"/>
        <end position="133"/>
    </location>
</feature>
<feature type="domain" description="Ig-like C2-type 2">
    <location>
        <begin position="146"/>
        <end position="235"/>
    </location>
</feature>
<feature type="domain" description="Ig-like C2-type 3">
    <location>
        <begin position="245"/>
        <end position="353"/>
    </location>
</feature>
<feature type="domain" description="TIR" evidence="4">
    <location>
        <begin position="407"/>
        <end position="563"/>
    </location>
</feature>
<feature type="region of interest" description="Required for synaptic vesicle accumulation during synaptogenesis" evidence="1">
    <location>
        <begin position="568"/>
        <end position="701"/>
    </location>
</feature>
<feature type="active site" evidence="4">
    <location>
        <position position="495"/>
    </location>
</feature>
<feature type="glycosylation site" description="N-linked (GlcNAc...) asparagine" evidence="2">
    <location>
        <position position="64"/>
    </location>
</feature>
<feature type="glycosylation site" description="N-linked (GlcNAc...) asparagine" evidence="2">
    <location>
        <position position="125"/>
    </location>
</feature>
<feature type="glycosylation site" description="N-linked (GlcNAc...) asparagine" evidence="2">
    <location>
        <position position="141"/>
    </location>
</feature>
<feature type="glycosylation site" description="N-linked (GlcNAc...) asparagine" evidence="2">
    <location>
        <position position="216"/>
    </location>
</feature>
<feature type="glycosylation site" description="N-linked (GlcNAc...) asparagine" evidence="2">
    <location>
        <position position="267"/>
    </location>
</feature>
<feature type="glycosylation site" description="N-linked (GlcNAc...) asparagine" evidence="2">
    <location>
        <position position="334"/>
    </location>
</feature>
<feature type="disulfide bond" evidence="3">
    <location>
        <begin position="54"/>
        <end position="121"/>
    </location>
</feature>
<feature type="disulfide bond" evidence="3">
    <location>
        <begin position="167"/>
        <end position="219"/>
    </location>
</feature>
<feature type="disulfide bond" evidence="3">
    <location>
        <begin position="270"/>
        <end position="337"/>
    </location>
</feature>
<feature type="splice variant" id="VSP_038547" description="In isoform 2." evidence="6">
    <original>T</original>
    <variation>SMSSQHYQDDTHLLRA</variation>
    <location>
        <position position="462"/>
    </location>
</feature>
<feature type="sequence conflict" description="In Ref. 2; AAI24595." evidence="7" ref="2">
    <original>Y</original>
    <variation>C</variation>
    <location>
        <position position="42"/>
    </location>
</feature>
<dbReference type="EC" id="3.2.2.6" evidence="4"/>
<dbReference type="EMBL" id="AB449367">
    <property type="protein sequence ID" value="BAG85346.1"/>
    <property type="molecule type" value="mRNA"/>
</dbReference>
<dbReference type="EMBL" id="BC124594">
    <property type="protein sequence ID" value="AAI24595.1"/>
    <property type="molecule type" value="mRNA"/>
</dbReference>
<dbReference type="RefSeq" id="NP_001071044.2">
    <molecule id="B6ZK76-2"/>
    <property type="nucleotide sequence ID" value="NM_001077576.2"/>
</dbReference>
<dbReference type="RefSeq" id="XP_005174755.1">
    <molecule id="B6ZK76-2"/>
    <property type="nucleotide sequence ID" value="XM_005174698.5"/>
</dbReference>
<dbReference type="RefSeq" id="XP_009303034.1">
    <molecule id="B6ZK76-2"/>
    <property type="nucleotide sequence ID" value="XM_009304759.4"/>
</dbReference>
<dbReference type="RefSeq" id="XP_017213199.1">
    <molecule id="B6ZK76-2"/>
    <property type="nucleotide sequence ID" value="XM_017357710.3"/>
</dbReference>
<dbReference type="RefSeq" id="XP_021334423.1">
    <molecule id="B6ZK76-2"/>
    <property type="nucleotide sequence ID" value="XM_021478748.2"/>
</dbReference>
<dbReference type="RefSeq" id="XP_068079564.1">
    <molecule id="B6ZK76-2"/>
    <property type="nucleotide sequence ID" value="XM_068223463.1"/>
</dbReference>
<dbReference type="RefSeq" id="XP_068079565.1">
    <molecule id="B6ZK76-1"/>
    <property type="nucleotide sequence ID" value="XM_068223464.1"/>
</dbReference>
<dbReference type="RefSeq" id="XP_068079566.1">
    <molecule id="B6ZK76-1"/>
    <property type="nucleotide sequence ID" value="XM_068223465.1"/>
</dbReference>
<dbReference type="SMR" id="B6ZK76"/>
<dbReference type="STRING" id="7955.ENSDARP00000117551"/>
<dbReference type="GlyCosmos" id="B6ZK76">
    <property type="glycosylation" value="6 sites, No reported glycans"/>
</dbReference>
<dbReference type="PaxDb" id="7955-ENSDARP00000117551"/>
<dbReference type="Ensembl" id="ENSDART00000089206">
    <molecule id="B6ZK76-1"/>
    <property type="protein sequence ID" value="ENSDARP00000083639"/>
    <property type="gene ID" value="ENSDARG00000115285"/>
</dbReference>
<dbReference type="GeneID" id="568868"/>
<dbReference type="KEGG" id="dre:568868"/>
<dbReference type="AGR" id="ZFIN:ZDB-GENE-061013-249"/>
<dbReference type="CTD" id="568868"/>
<dbReference type="ZFIN" id="ZDB-GENE-061013-249">
    <property type="gene designation" value="il1rapl1a"/>
</dbReference>
<dbReference type="eggNOG" id="KOG3971">
    <property type="taxonomic scope" value="Eukaryota"/>
</dbReference>
<dbReference type="InParanoid" id="B6ZK76"/>
<dbReference type="OMA" id="MQQWRSS"/>
<dbReference type="OrthoDB" id="8948897at2759"/>
<dbReference type="PhylomeDB" id="B6ZK76"/>
<dbReference type="PRO" id="PR:B6ZK76"/>
<dbReference type="Proteomes" id="UP000000437">
    <property type="component" value="Alternate scaffold 9"/>
</dbReference>
<dbReference type="Proteomes" id="UP000000437">
    <property type="component" value="Chromosome 9"/>
</dbReference>
<dbReference type="Bgee" id="ENSDARG00000115285">
    <property type="expression patterns" value="Expressed in multicellular organism and 2 other cell types or tissues"/>
</dbReference>
<dbReference type="GO" id="GO:0009986">
    <property type="term" value="C:cell surface"/>
    <property type="evidence" value="ECO:0000318"/>
    <property type="project" value="GO_Central"/>
</dbReference>
<dbReference type="GO" id="GO:0005737">
    <property type="term" value="C:cytoplasm"/>
    <property type="evidence" value="ECO:0007669"/>
    <property type="project" value="UniProtKB-SubCell"/>
</dbReference>
<dbReference type="GO" id="GO:0005886">
    <property type="term" value="C:plasma membrane"/>
    <property type="evidence" value="ECO:0000318"/>
    <property type="project" value="GO_Central"/>
</dbReference>
<dbReference type="GO" id="GO:0004908">
    <property type="term" value="F:interleukin-1 receptor activity"/>
    <property type="evidence" value="ECO:0007669"/>
    <property type="project" value="InterPro"/>
</dbReference>
<dbReference type="GO" id="GO:0061809">
    <property type="term" value="F:NAD+ nucleosidase activity, cyclic ADP-ribose generating"/>
    <property type="evidence" value="ECO:0007669"/>
    <property type="project" value="UniProtKB-EC"/>
</dbReference>
<dbReference type="GO" id="GO:0007166">
    <property type="term" value="P:cell surface receptor signaling pathway"/>
    <property type="evidence" value="ECO:0000318"/>
    <property type="project" value="GO_Central"/>
</dbReference>
<dbReference type="GO" id="GO:0045920">
    <property type="term" value="P:negative regulation of exocytosis"/>
    <property type="evidence" value="ECO:0000318"/>
    <property type="project" value="GO_Central"/>
</dbReference>
<dbReference type="CDD" id="cd00096">
    <property type="entry name" value="Ig"/>
    <property type="match status" value="1"/>
</dbReference>
<dbReference type="CDD" id="cd05896">
    <property type="entry name" value="Ig1_IL1RAPL-1_like"/>
    <property type="match status" value="1"/>
</dbReference>
<dbReference type="FunFam" id="2.60.40.10:FF:000188">
    <property type="entry name" value="Interleukin-1 receptor accessory protein-like 1"/>
    <property type="match status" value="1"/>
</dbReference>
<dbReference type="FunFam" id="2.60.40.10:FF:000284">
    <property type="entry name" value="interleukin-1 receptor accessory protein-like 1"/>
    <property type="match status" value="1"/>
</dbReference>
<dbReference type="FunFam" id="2.60.40.10:FF:000220">
    <property type="entry name" value="X-linked interleukin-1 receptor accessory protein-like 1"/>
    <property type="match status" value="1"/>
</dbReference>
<dbReference type="FunFam" id="3.40.50.10140:FF:000009">
    <property type="entry name" value="X-linked interleukin-1 receptor accessory protein-like 1"/>
    <property type="match status" value="1"/>
</dbReference>
<dbReference type="Gene3D" id="2.60.40.10">
    <property type="entry name" value="Immunoglobulins"/>
    <property type="match status" value="3"/>
</dbReference>
<dbReference type="Gene3D" id="3.40.50.10140">
    <property type="entry name" value="Toll/interleukin-1 receptor homology (TIR) domain"/>
    <property type="match status" value="1"/>
</dbReference>
<dbReference type="InterPro" id="IPR007110">
    <property type="entry name" value="Ig-like_dom"/>
</dbReference>
<dbReference type="InterPro" id="IPR036179">
    <property type="entry name" value="Ig-like_dom_sf"/>
</dbReference>
<dbReference type="InterPro" id="IPR013783">
    <property type="entry name" value="Ig-like_fold"/>
</dbReference>
<dbReference type="InterPro" id="IPR003599">
    <property type="entry name" value="Ig_sub"/>
</dbReference>
<dbReference type="InterPro" id="IPR003598">
    <property type="entry name" value="Ig_sub2"/>
</dbReference>
<dbReference type="InterPro" id="IPR015621">
    <property type="entry name" value="IL-1_rcpt_fam"/>
</dbReference>
<dbReference type="InterPro" id="IPR004074">
    <property type="entry name" value="IL-1_rcpt_I/II-typ"/>
</dbReference>
<dbReference type="InterPro" id="IPR000157">
    <property type="entry name" value="TIR_dom"/>
</dbReference>
<dbReference type="InterPro" id="IPR035897">
    <property type="entry name" value="Toll_tir_struct_dom_sf"/>
</dbReference>
<dbReference type="PANTHER" id="PTHR11890:SF22">
    <property type="entry name" value="INTERLEUKIN-1 RECEPTOR ACCESSORY PROTEIN-LIKE 1"/>
    <property type="match status" value="1"/>
</dbReference>
<dbReference type="PANTHER" id="PTHR11890">
    <property type="entry name" value="INTERLEUKIN-1 RECEPTOR FAMILY MEMBER"/>
    <property type="match status" value="1"/>
</dbReference>
<dbReference type="Pfam" id="PF13927">
    <property type="entry name" value="Ig_3"/>
    <property type="match status" value="1"/>
</dbReference>
<dbReference type="Pfam" id="PF01582">
    <property type="entry name" value="TIR"/>
    <property type="match status" value="1"/>
</dbReference>
<dbReference type="PRINTS" id="PR01536">
    <property type="entry name" value="INTRLKN1R12F"/>
</dbReference>
<dbReference type="PRINTS" id="PR01537">
    <property type="entry name" value="INTRLKN1R1F"/>
</dbReference>
<dbReference type="SMART" id="SM00409">
    <property type="entry name" value="IG"/>
    <property type="match status" value="3"/>
</dbReference>
<dbReference type="SMART" id="SM00408">
    <property type="entry name" value="IGc2"/>
    <property type="match status" value="2"/>
</dbReference>
<dbReference type="SMART" id="SM00255">
    <property type="entry name" value="TIR"/>
    <property type="match status" value="1"/>
</dbReference>
<dbReference type="SUPFAM" id="SSF48726">
    <property type="entry name" value="Immunoglobulin"/>
    <property type="match status" value="3"/>
</dbReference>
<dbReference type="SUPFAM" id="SSF52200">
    <property type="entry name" value="Toll/Interleukin receptor TIR domain"/>
    <property type="match status" value="1"/>
</dbReference>
<dbReference type="PROSITE" id="PS50835">
    <property type="entry name" value="IG_LIKE"/>
    <property type="match status" value="3"/>
</dbReference>
<dbReference type="PROSITE" id="PS50104">
    <property type="entry name" value="TIR"/>
    <property type="match status" value="1"/>
</dbReference>
<evidence type="ECO:0000250" key="1"/>
<evidence type="ECO:0000255" key="2"/>
<evidence type="ECO:0000255" key="3">
    <source>
        <dbReference type="PROSITE-ProRule" id="PRU00114"/>
    </source>
</evidence>
<evidence type="ECO:0000255" key="4">
    <source>
        <dbReference type="PROSITE-ProRule" id="PRU00204"/>
    </source>
</evidence>
<evidence type="ECO:0000269" key="5">
    <source>
    </source>
</evidence>
<evidence type="ECO:0000303" key="6">
    <source ref="2"/>
</evidence>
<evidence type="ECO:0000305" key="7"/>
<protein>
    <recommendedName>
        <fullName>Interleukin-1 receptor accessory protein-like 1-A</fullName>
        <ecNumber evidence="4">3.2.2.6</ecNumber>
    </recommendedName>
</protein>
<gene>
    <name type="primary">il1rapl1a</name>
    <name type="ORF">zgc:152866</name>
</gene>
<accession>B6ZK76</accession>
<accession>Q08BS0</accession>